<name>YIDA_SHIFL</name>
<gene>
    <name type="primary">yidA</name>
    <name type="ordered locus">SF3767</name>
    <name type="ordered locus">S4004</name>
</gene>
<sequence>MAIKLIAIDMDGTLLLPDHTISPAVKNAIAAARARGVNVVLTTGRPYAGVHNYLKELHMEQPGDYCITYNGALVQKAADGSTVAQTALSYDDYRFLEKLSREVGSHFHALDRTTLYTANRDISYYTVHESFVATIPLVFCEAEKMDPNTQFLKVMMIDEPAILDQAIARIPQEVKEKYTVLKSAPYFLEILDKRVNKGTGVKSLADVLGIKPEEIMAIGDQENDIAMIEYAGVGVAMDNAIPSVKEVANFVTKSNLEDGVAFAIEKYVLN</sequence>
<proteinExistence type="inferred from homology"/>
<comment type="function">
    <text evidence="1">Catalyzes the dephosphorylation of different sugar phosphates.</text>
</comment>
<comment type="catalytic activity">
    <reaction>
        <text>sugar phosphate + H2O = sugar + phosphate.</text>
        <dbReference type="EC" id="3.1.3.23"/>
    </reaction>
</comment>
<comment type="cofactor">
    <cofactor evidence="1">
        <name>Mg(2+)</name>
        <dbReference type="ChEBI" id="CHEBI:18420"/>
    </cofactor>
</comment>
<comment type="subunit">
    <text evidence="1">Homodimer.</text>
</comment>
<comment type="similarity">
    <text evidence="2">Belongs to the HAD-like hydrolase superfamily. Cof family.</text>
</comment>
<protein>
    <recommendedName>
        <fullName>Sugar phosphatase YidA</fullName>
        <ecNumber>3.1.3.23</ecNumber>
    </recommendedName>
</protein>
<accession>P0A8Y7</accession>
<accession>P09997</accession>
<accession>P76737</accession>
<evidence type="ECO:0000250" key="1"/>
<evidence type="ECO:0000305" key="2"/>
<dbReference type="EC" id="3.1.3.23"/>
<dbReference type="EMBL" id="AE005674">
    <property type="protein sequence ID" value="AAN45210.1"/>
    <property type="molecule type" value="Genomic_DNA"/>
</dbReference>
<dbReference type="EMBL" id="AE014073">
    <property type="protein sequence ID" value="AAP18987.1"/>
    <property type="molecule type" value="Genomic_DNA"/>
</dbReference>
<dbReference type="RefSeq" id="NP_709503.1">
    <property type="nucleotide sequence ID" value="NC_004337.2"/>
</dbReference>
<dbReference type="RefSeq" id="WP_000985549.1">
    <property type="nucleotide sequence ID" value="NZ_WPGW01000019.1"/>
</dbReference>
<dbReference type="SMR" id="P0A8Y7"/>
<dbReference type="STRING" id="198214.SF3767"/>
<dbReference type="PaxDb" id="198214-SF3767"/>
<dbReference type="GeneID" id="1026098"/>
<dbReference type="GeneID" id="93778438"/>
<dbReference type="KEGG" id="sfl:SF3767"/>
<dbReference type="KEGG" id="sfx:S4004"/>
<dbReference type="PATRIC" id="fig|198214.7.peg.4445"/>
<dbReference type="HOGENOM" id="CLU_044146_0_1_6"/>
<dbReference type="Proteomes" id="UP000001006">
    <property type="component" value="Chromosome"/>
</dbReference>
<dbReference type="Proteomes" id="UP000002673">
    <property type="component" value="Chromosome"/>
</dbReference>
<dbReference type="GO" id="GO:0005829">
    <property type="term" value="C:cytosol"/>
    <property type="evidence" value="ECO:0007669"/>
    <property type="project" value="TreeGrafter"/>
</dbReference>
<dbReference type="GO" id="GO:0000287">
    <property type="term" value="F:magnesium ion binding"/>
    <property type="evidence" value="ECO:0000250"/>
    <property type="project" value="UniProtKB"/>
</dbReference>
<dbReference type="GO" id="GO:0016791">
    <property type="term" value="F:phosphatase activity"/>
    <property type="evidence" value="ECO:0000250"/>
    <property type="project" value="UniProtKB"/>
</dbReference>
<dbReference type="GO" id="GO:0050308">
    <property type="term" value="F:sugar-phosphatase activity"/>
    <property type="evidence" value="ECO:0000250"/>
    <property type="project" value="UniProtKB"/>
</dbReference>
<dbReference type="GO" id="GO:0016311">
    <property type="term" value="P:dephosphorylation"/>
    <property type="evidence" value="ECO:0000250"/>
    <property type="project" value="UniProtKB"/>
</dbReference>
<dbReference type="CDD" id="cd07516">
    <property type="entry name" value="HAD_Pase"/>
    <property type="match status" value="1"/>
</dbReference>
<dbReference type="FunFam" id="3.30.1240.10:FF:000001">
    <property type="entry name" value="Sugar phosphatase YidA"/>
    <property type="match status" value="1"/>
</dbReference>
<dbReference type="Gene3D" id="3.30.1240.10">
    <property type="match status" value="1"/>
</dbReference>
<dbReference type="Gene3D" id="3.40.50.1000">
    <property type="entry name" value="HAD superfamily/HAD-like"/>
    <property type="match status" value="1"/>
</dbReference>
<dbReference type="InterPro" id="IPR000150">
    <property type="entry name" value="Cof"/>
</dbReference>
<dbReference type="InterPro" id="IPR036412">
    <property type="entry name" value="HAD-like_sf"/>
</dbReference>
<dbReference type="InterPro" id="IPR006379">
    <property type="entry name" value="HAD-SF_hydro_IIB"/>
</dbReference>
<dbReference type="InterPro" id="IPR023214">
    <property type="entry name" value="HAD_sf"/>
</dbReference>
<dbReference type="NCBIfam" id="TIGR00099">
    <property type="entry name" value="Cof-subfamily"/>
    <property type="match status" value="1"/>
</dbReference>
<dbReference type="NCBIfam" id="TIGR01484">
    <property type="entry name" value="HAD-SF-IIB"/>
    <property type="match status" value="1"/>
</dbReference>
<dbReference type="NCBIfam" id="NF007806">
    <property type="entry name" value="PRK10513.1"/>
    <property type="match status" value="1"/>
</dbReference>
<dbReference type="PANTHER" id="PTHR10000:SF8">
    <property type="entry name" value="HAD SUPERFAMILY HYDROLASE-LIKE, TYPE 3"/>
    <property type="match status" value="1"/>
</dbReference>
<dbReference type="PANTHER" id="PTHR10000">
    <property type="entry name" value="PHOSPHOSERINE PHOSPHATASE"/>
    <property type="match status" value="1"/>
</dbReference>
<dbReference type="Pfam" id="PF08282">
    <property type="entry name" value="Hydrolase_3"/>
    <property type="match status" value="1"/>
</dbReference>
<dbReference type="SFLD" id="SFLDG01144">
    <property type="entry name" value="C2.B.4:_PGP_Like"/>
    <property type="match status" value="1"/>
</dbReference>
<dbReference type="SFLD" id="SFLDG01140">
    <property type="entry name" value="C2.B:_Phosphomannomutase_and_P"/>
    <property type="match status" value="1"/>
</dbReference>
<dbReference type="SUPFAM" id="SSF56784">
    <property type="entry name" value="HAD-like"/>
    <property type="match status" value="1"/>
</dbReference>
<dbReference type="PROSITE" id="PS01228">
    <property type="entry name" value="COF_1"/>
    <property type="match status" value="1"/>
</dbReference>
<dbReference type="PROSITE" id="PS01229">
    <property type="entry name" value="COF_2"/>
    <property type="match status" value="1"/>
</dbReference>
<keyword id="KW-0378">Hydrolase</keyword>
<keyword id="KW-0460">Magnesium</keyword>
<keyword id="KW-0479">Metal-binding</keyword>
<keyword id="KW-1185">Reference proteome</keyword>
<organism>
    <name type="scientific">Shigella flexneri</name>
    <dbReference type="NCBI Taxonomy" id="623"/>
    <lineage>
        <taxon>Bacteria</taxon>
        <taxon>Pseudomonadati</taxon>
        <taxon>Pseudomonadota</taxon>
        <taxon>Gammaproteobacteria</taxon>
        <taxon>Enterobacterales</taxon>
        <taxon>Enterobacteriaceae</taxon>
        <taxon>Shigella</taxon>
    </lineage>
</organism>
<feature type="chain" id="PRO_0000054425" description="Sugar phosphatase YidA">
    <location>
        <begin position="1"/>
        <end position="270"/>
    </location>
</feature>
<feature type="active site" description="Nucleophile" evidence="1">
    <location>
        <position position="9"/>
    </location>
</feature>
<feature type="binding site" evidence="1">
    <location>
        <position position="9"/>
    </location>
    <ligand>
        <name>Mg(2+)</name>
        <dbReference type="ChEBI" id="CHEBI:18420"/>
    </ligand>
</feature>
<feature type="binding site" evidence="1">
    <location>
        <position position="10"/>
    </location>
    <ligand>
        <name>phosphate</name>
        <dbReference type="ChEBI" id="CHEBI:43474"/>
    </ligand>
</feature>
<feature type="binding site" evidence="1">
    <location>
        <position position="11"/>
    </location>
    <ligand>
        <name>Mg(2+)</name>
        <dbReference type="ChEBI" id="CHEBI:18420"/>
    </ligand>
</feature>
<feature type="binding site" evidence="1">
    <location>
        <begin position="43"/>
        <end position="44"/>
    </location>
    <ligand>
        <name>phosphate</name>
        <dbReference type="ChEBI" id="CHEBI:43474"/>
    </ligand>
</feature>
<feature type="binding site" evidence="1">
    <location>
        <position position="197"/>
    </location>
    <ligand>
        <name>phosphate</name>
        <dbReference type="ChEBI" id="CHEBI:43474"/>
    </ligand>
</feature>
<feature type="binding site" evidence="1">
    <location>
        <position position="220"/>
    </location>
    <ligand>
        <name>Mg(2+)</name>
        <dbReference type="ChEBI" id="CHEBI:18420"/>
    </ligand>
</feature>
<feature type="binding site" evidence="1">
    <location>
        <position position="223"/>
    </location>
    <ligand>
        <name>phosphate</name>
        <dbReference type="ChEBI" id="CHEBI:43474"/>
    </ligand>
</feature>
<reference key="1">
    <citation type="journal article" date="2002" name="Nucleic Acids Res.">
        <title>Genome sequence of Shigella flexneri 2a: insights into pathogenicity through comparison with genomes of Escherichia coli K12 and O157.</title>
        <authorList>
            <person name="Jin Q."/>
            <person name="Yuan Z."/>
            <person name="Xu J."/>
            <person name="Wang Y."/>
            <person name="Shen Y."/>
            <person name="Lu W."/>
            <person name="Wang J."/>
            <person name="Liu H."/>
            <person name="Yang J."/>
            <person name="Yang F."/>
            <person name="Zhang X."/>
            <person name="Zhang J."/>
            <person name="Yang G."/>
            <person name="Wu H."/>
            <person name="Qu D."/>
            <person name="Dong J."/>
            <person name="Sun L."/>
            <person name="Xue Y."/>
            <person name="Zhao A."/>
            <person name="Gao Y."/>
            <person name="Zhu J."/>
            <person name="Kan B."/>
            <person name="Ding K."/>
            <person name="Chen S."/>
            <person name="Cheng H."/>
            <person name="Yao Z."/>
            <person name="He B."/>
            <person name="Chen R."/>
            <person name="Ma D."/>
            <person name="Qiang B."/>
            <person name="Wen Y."/>
            <person name="Hou Y."/>
            <person name="Yu J."/>
        </authorList>
    </citation>
    <scope>NUCLEOTIDE SEQUENCE [LARGE SCALE GENOMIC DNA]</scope>
    <source>
        <strain>301 / Serotype 2a</strain>
    </source>
</reference>
<reference key="2">
    <citation type="journal article" date="2003" name="Infect. Immun.">
        <title>Complete genome sequence and comparative genomics of Shigella flexneri serotype 2a strain 2457T.</title>
        <authorList>
            <person name="Wei J."/>
            <person name="Goldberg M.B."/>
            <person name="Burland V."/>
            <person name="Venkatesan M.M."/>
            <person name="Deng W."/>
            <person name="Fournier G."/>
            <person name="Mayhew G.F."/>
            <person name="Plunkett G. III"/>
            <person name="Rose D.J."/>
            <person name="Darling A."/>
            <person name="Mau B."/>
            <person name="Perna N.T."/>
            <person name="Payne S.M."/>
            <person name="Runyen-Janecky L.J."/>
            <person name="Zhou S."/>
            <person name="Schwartz D.C."/>
            <person name="Blattner F.R."/>
        </authorList>
    </citation>
    <scope>NUCLEOTIDE SEQUENCE [LARGE SCALE GENOMIC DNA]</scope>
    <source>
        <strain>ATCC 700930 / 2457T / Serotype 2a</strain>
    </source>
</reference>